<sequence>MSSPELPSQMGVPNGHTKLQEVTPDTPLDEVFQKWEEDGGVIIKGILAPAQVTQLREELQPLLDTFQRGSTTDIEPLKRFHGSQTKRAGGLTNCSAIFRDYLLDNDFLHAIAARCFGSGGRPGVHAYWISSANTINVGPGQPAQVLHRDLGNYPHYHLLGPDGPESQATFLIATTDFTDANGATRIIPGSQKWPFNQTWNPSQSIPSEMHAGDCLLFGGKVVHGTGANTTNAERGCVAFTFCANHLTPEEAHPHIVDINIVRKLSERAQRSLGFRSQYPRGAPGLWMEGYNEVATRLGLDSK</sequence>
<keyword id="KW-0223">Dioxygenase</keyword>
<keyword id="KW-0408">Iron</keyword>
<keyword id="KW-0479">Metal-binding</keyword>
<keyword id="KW-0560">Oxidoreductase</keyword>
<feature type="chain" id="PRO_0000449863" description="Dioxygenase ALT11">
    <location>
        <begin position="1"/>
        <end position="302"/>
    </location>
</feature>
<feature type="region of interest" description="Disordered" evidence="6">
    <location>
        <begin position="1"/>
        <end position="22"/>
    </location>
</feature>
<feature type="binding site" evidence="2">
    <location>
        <position position="147"/>
    </location>
    <ligand>
        <name>Fe cation</name>
        <dbReference type="ChEBI" id="CHEBI:24875"/>
    </ligand>
</feature>
<feature type="binding site" evidence="2">
    <location>
        <position position="149"/>
    </location>
    <ligand>
        <name>Fe cation</name>
        <dbReference type="ChEBI" id="CHEBI:24875"/>
    </ligand>
</feature>
<feature type="binding site" evidence="2">
    <location>
        <position position="223"/>
    </location>
    <ligand>
        <name>Fe cation</name>
        <dbReference type="ChEBI" id="CHEBI:24875"/>
    </ligand>
</feature>
<name>ALT11_ALTAL</name>
<accession>A0A3G9HRC8</accession>
<proteinExistence type="inferred from homology"/>
<gene>
    <name evidence="11" type="primary">ALT11b</name>
</gene>
<protein>
    <recommendedName>
        <fullName evidence="4">Dioxygenase ALT11</fullName>
        <ecNumber evidence="5">1.14.11.-</ecNumber>
    </recommendedName>
    <alternativeName>
        <fullName evidence="11">AAL-toxin biosynthesis cluster protein 11</fullName>
    </alternativeName>
</protein>
<dbReference type="EC" id="1.14.11.-" evidence="5"/>
<dbReference type="EMBL" id="AB969680">
    <property type="protein sequence ID" value="BBG74284.1"/>
    <property type="molecule type" value="Genomic_DNA"/>
</dbReference>
<dbReference type="SMR" id="A0A3G9HRC8"/>
<dbReference type="GO" id="GO:0051213">
    <property type="term" value="F:dioxygenase activity"/>
    <property type="evidence" value="ECO:0007669"/>
    <property type="project" value="UniProtKB-KW"/>
</dbReference>
<dbReference type="GO" id="GO:0046872">
    <property type="term" value="F:metal ion binding"/>
    <property type="evidence" value="ECO:0007669"/>
    <property type="project" value="UniProtKB-KW"/>
</dbReference>
<dbReference type="Gene3D" id="2.60.120.620">
    <property type="entry name" value="q2cbj1_9rhob like domain"/>
    <property type="match status" value="1"/>
</dbReference>
<dbReference type="InterPro" id="IPR008775">
    <property type="entry name" value="Phytyl_CoA_dOase-like"/>
</dbReference>
<dbReference type="PANTHER" id="PTHR20883:SF19">
    <property type="entry name" value="MULTIFUNCTIONAL DIOXYGENASE AUSE"/>
    <property type="match status" value="1"/>
</dbReference>
<dbReference type="PANTHER" id="PTHR20883">
    <property type="entry name" value="PHYTANOYL-COA DIOXYGENASE DOMAIN CONTAINING 1"/>
    <property type="match status" value="1"/>
</dbReference>
<dbReference type="Pfam" id="PF05721">
    <property type="entry name" value="PhyH"/>
    <property type="match status" value="1"/>
</dbReference>
<dbReference type="SUPFAM" id="SSF51197">
    <property type="entry name" value="Clavaminate synthase-like"/>
    <property type="match status" value="1"/>
</dbReference>
<comment type="function">
    <text evidence="7 8 9 10 13">Dioxygenase; part of the gene cluster that mediates the biosynthesis of the host-selective toxins (HSTs) AAL-toxins, sphinganine-analog mycotoxins responsible for Alternaria stem canker on tomato by the tomato pathotype (PubMed:18435561, PubMed:19449880, PubMed:19749175). The biosynthesis starts with the polyketide synthase ALT1-catalyzed C-16 carbon chain assembly from one starter acetyl-CoA unit with malonyl-CoA extender units (PubMed:18435561, PubMed:19449880). ALT1 also selectively transfers methyl groups at the first and the third cycle of chain elongation for AAL toxin (PubMed:19449880). The C-16 polyketide chain is released from the enzyme by a nucleophilic attack of a carbanion, which is derived from R-carbon of glycin by decarboxylation, on the carbonyl carbon of polyketide acyl chain (Probable). This step is probably catalyzed by a pyridoxal 5'-phosphate-dependent aminoacyl transferase ALT4 (Probable). The respective functions of the other enzymes encoded by the cluster have still to be elucidated (Probable). The sphingosine N-acyltransferase-like protein ALT7 seems not to act as a resistance/self-tolerance factor against the toxin in the toxin biosynthetic gene cluster, contrary to what is expected (Ref.5).</text>
</comment>
<comment type="cofactor">
    <cofactor evidence="1">
        <name>Fe cation</name>
        <dbReference type="ChEBI" id="CHEBI:24875"/>
    </cofactor>
</comment>
<comment type="pathway">
    <text evidence="4">Mycotoxin biosynthesis.</text>
</comment>
<comment type="subunit">
    <text evidence="3">Homodimer.</text>
</comment>
<comment type="miscellaneous">
    <text evidence="9">Gene clusters encoding host-selective toxins (HSTs) are localized on conditionally dispensable chromosomes (CDCs), also called supernumerary chromosomes, where they are present in multiple copies. The CDCs are not essential for saprophytic growth but controls host-selective pathogenicity.</text>
</comment>
<comment type="similarity">
    <text evidence="12">Belongs to the PhyH family.</text>
</comment>
<evidence type="ECO:0000250" key="1">
    <source>
        <dbReference type="UniProtKB" id="A0A097ZPD9"/>
    </source>
</evidence>
<evidence type="ECO:0000250" key="2">
    <source>
        <dbReference type="UniProtKB" id="O14832"/>
    </source>
</evidence>
<evidence type="ECO:0000250" key="3">
    <source>
        <dbReference type="UniProtKB" id="Q4WAW9"/>
    </source>
</evidence>
<evidence type="ECO:0000250" key="4">
    <source>
        <dbReference type="UniProtKB" id="Q8J2Q9"/>
    </source>
</evidence>
<evidence type="ECO:0000250" key="5">
    <source>
        <dbReference type="UniProtKB" id="W7LKX6"/>
    </source>
</evidence>
<evidence type="ECO:0000256" key="6">
    <source>
        <dbReference type="SAM" id="MobiDB-lite"/>
    </source>
</evidence>
<evidence type="ECO:0000269" key="7">
    <source>
    </source>
</evidence>
<evidence type="ECO:0000269" key="8">
    <source>
    </source>
</evidence>
<evidence type="ECO:0000269" key="9">
    <source>
    </source>
</evidence>
<evidence type="ECO:0000269" key="10">
    <source ref="5"/>
</evidence>
<evidence type="ECO:0000303" key="11">
    <source ref="1"/>
</evidence>
<evidence type="ECO:0000305" key="12"/>
<evidence type="ECO:0000305" key="13">
    <source>
    </source>
</evidence>
<reference key="1">
    <citation type="submission" date="2014-06" db="EMBL/GenBank/DDBJ databases">
        <title>AAL-toxin biosynthetic genes cluster in the tomato pathotype of Alternaria alternata.</title>
        <authorList>
            <person name="Akagi Y."/>
            <person name="Akamatsu H."/>
            <person name="Takao K."/>
            <person name="Tsuge T."/>
            <person name="Kodama M."/>
        </authorList>
    </citation>
    <scope>NUCLEOTIDE SEQUENCE [GENOMIC DNA]</scope>
    <source>
        <strain>As-27</strain>
    </source>
</reference>
<reference key="2">
    <citation type="journal article" date="2008" name="J. Nat. Prod.">
        <title>Functional complementation of fumonisin biosynthesis in FUM1-disrupted fusarium verticillioides by the AAL-toxin polyketide synthase gene ALT1 from Alternaria alternata f. sp. Lycopersici.</title>
        <authorList>
            <person name="Zhu X."/>
            <person name="Vogeler C."/>
            <person name="Du L."/>
        </authorList>
    </citation>
    <scope>FUNCTION</scope>
</reference>
<reference key="3">
    <citation type="journal article" date="2009" name="Eukaryot. Cell">
        <title>Horizontal chromosome transfer, a mechanism for the evolution and differentiation of a plant-pathogenic fungus.</title>
        <authorList>
            <person name="Akagi Y."/>
            <person name="Akamatsu H."/>
            <person name="Otani H."/>
            <person name="Kodama M."/>
        </authorList>
    </citation>
    <scope>FUNCTION</scope>
</reference>
<reference key="4">
    <citation type="journal article" date="2009" name="J. Nat. Prod.">
        <title>Introduction of the AAL-toxin polyketide synthase gene ALT1 into FUM1-disrupted Fusarium verticillioides produces metabolites with the fumonisin methylation pattern.</title>
        <authorList>
            <person name="Li Y."/>
            <person name="Shen Y."/>
            <person name="Zhu X."/>
            <person name="Du L."/>
        </authorList>
    </citation>
    <scope>FUNCTION</scope>
</reference>
<reference key="5">
    <citation type="journal article" date="2012" name="J. Plant Pathol. Microbiol.">
        <title>Functional analysis of the ceramide synthase gene ALT7, a homolog of the disease resistance gene Asc1, in the plant pathogen Alternaria alternata.</title>
        <authorList>
            <person name="Kheder A.A."/>
            <person name="Akagi Y."/>
            <person name="Tsuge T."/>
            <person name="Kodama M."/>
        </authorList>
    </citation>
    <scope>FUNCTION</scope>
</reference>
<organism>
    <name type="scientific">Alternaria alternata</name>
    <name type="common">Alternaria rot fungus</name>
    <name type="synonym">Torula alternata</name>
    <dbReference type="NCBI Taxonomy" id="5599"/>
    <lineage>
        <taxon>Eukaryota</taxon>
        <taxon>Fungi</taxon>
        <taxon>Dikarya</taxon>
        <taxon>Ascomycota</taxon>
        <taxon>Pezizomycotina</taxon>
        <taxon>Dothideomycetes</taxon>
        <taxon>Pleosporomycetidae</taxon>
        <taxon>Pleosporales</taxon>
        <taxon>Pleosporineae</taxon>
        <taxon>Pleosporaceae</taxon>
        <taxon>Alternaria</taxon>
        <taxon>Alternaria sect. Alternaria</taxon>
        <taxon>Alternaria alternata complex</taxon>
    </lineage>
</organism>